<name>ASSY_HAEIN</name>
<gene>
    <name type="primary">argG</name>
    <name type="ordered locus">HI_1727</name>
</gene>
<proteinExistence type="inferred from homology"/>
<keyword id="KW-0028">Amino-acid biosynthesis</keyword>
<keyword id="KW-0055">Arginine biosynthesis</keyword>
<keyword id="KW-0067">ATP-binding</keyword>
<keyword id="KW-0963">Cytoplasm</keyword>
<keyword id="KW-0436">Ligase</keyword>
<keyword id="KW-0547">Nucleotide-binding</keyword>
<keyword id="KW-1185">Reference proteome</keyword>
<evidence type="ECO:0000250" key="1"/>
<evidence type="ECO:0000305" key="2"/>
<comment type="catalytic activity">
    <reaction>
        <text>L-citrulline + L-aspartate + ATP = 2-(N(omega)-L-arginino)succinate + AMP + diphosphate + H(+)</text>
        <dbReference type="Rhea" id="RHEA:10932"/>
        <dbReference type="ChEBI" id="CHEBI:15378"/>
        <dbReference type="ChEBI" id="CHEBI:29991"/>
        <dbReference type="ChEBI" id="CHEBI:30616"/>
        <dbReference type="ChEBI" id="CHEBI:33019"/>
        <dbReference type="ChEBI" id="CHEBI:57472"/>
        <dbReference type="ChEBI" id="CHEBI:57743"/>
        <dbReference type="ChEBI" id="CHEBI:456215"/>
        <dbReference type="EC" id="6.3.4.5"/>
    </reaction>
</comment>
<comment type="pathway">
    <text>Amino-acid biosynthesis; L-arginine biosynthesis; L-arginine from L-ornithine and carbamoyl phosphate: step 2/3.</text>
</comment>
<comment type="subunit">
    <text evidence="1">Homotetramer.</text>
</comment>
<comment type="subcellular location">
    <subcellularLocation>
        <location evidence="1">Cytoplasm</location>
    </subcellularLocation>
</comment>
<comment type="similarity">
    <text evidence="2">Belongs to the argininosuccinate synthase family. Type 2 subfamily.</text>
</comment>
<sequence>MSNTILQNLPKGQKVGIAFSGGLDTSAALLWMRQKGAVPYAYTANLGQPDEDDYNAIPKKAMAYGAENARLIDCRAQLAHEGIAAIQCGAFHISTGGIPYFNTTPLGRAVTGTMLVAAMKEDDVNIWGDGSTFKGNDIERFYRYGLLTNPNLKIYKPWLDVQFIEELGGRLEMSQFLIENGFDYKMSVEKAYSTDSNMLGATHEAKDLEQLSTGMKIVKPIMGVAFWDEKVEIKPETVTVTFEDGVPVALNGKHFDNAVDLILEANRIGGRHGLGMSDQIENRIIEAKSRGIYEAPGMALLHIAYERLVTGIHNEDTIEQYRINGIRLGRLLYQGRWFDPQALMLRETAQRWVAKAITGTVTLELRRGNDFTILNTESPNLTYEAERLSMEKVEDAPFDPIDRIGQLTMRNLDVSDTRGKLGIYAQTGLLSAIKDSVLPQLGKK</sequence>
<reference key="1">
    <citation type="journal article" date="1995" name="Science">
        <title>Whole-genome random sequencing and assembly of Haemophilus influenzae Rd.</title>
        <authorList>
            <person name="Fleischmann R.D."/>
            <person name="Adams M.D."/>
            <person name="White O."/>
            <person name="Clayton R.A."/>
            <person name="Kirkness E.F."/>
            <person name="Kerlavage A.R."/>
            <person name="Bult C.J."/>
            <person name="Tomb J.-F."/>
            <person name="Dougherty B.A."/>
            <person name="Merrick J.M."/>
            <person name="McKenney K."/>
            <person name="Sutton G.G."/>
            <person name="FitzHugh W."/>
            <person name="Fields C.A."/>
            <person name="Gocayne J.D."/>
            <person name="Scott J.D."/>
            <person name="Shirley R."/>
            <person name="Liu L.-I."/>
            <person name="Glodek A."/>
            <person name="Kelley J.M."/>
            <person name="Weidman J.F."/>
            <person name="Phillips C.A."/>
            <person name="Spriggs T."/>
            <person name="Hedblom E."/>
            <person name="Cotton M.D."/>
            <person name="Utterback T.R."/>
            <person name="Hanna M.C."/>
            <person name="Nguyen D.T."/>
            <person name="Saudek D.M."/>
            <person name="Brandon R.C."/>
            <person name="Fine L.D."/>
            <person name="Fritchman J.L."/>
            <person name="Fuhrmann J.L."/>
            <person name="Geoghagen N.S.M."/>
            <person name="Gnehm C.L."/>
            <person name="McDonald L.A."/>
            <person name="Small K.V."/>
            <person name="Fraser C.M."/>
            <person name="Smith H.O."/>
            <person name="Venter J.C."/>
        </authorList>
    </citation>
    <scope>NUCLEOTIDE SEQUENCE [LARGE SCALE GENOMIC DNA]</scope>
    <source>
        <strain>ATCC 51907 / DSM 11121 / KW20 / Rd</strain>
    </source>
</reference>
<dbReference type="EC" id="6.3.4.5"/>
<dbReference type="EMBL" id="L42023">
    <property type="protein sequence ID" value="AAC23373.1"/>
    <property type="molecule type" value="Genomic_DNA"/>
</dbReference>
<dbReference type="PIR" id="F64138">
    <property type="entry name" value="F64138"/>
</dbReference>
<dbReference type="RefSeq" id="NP_439868.1">
    <property type="nucleotide sequence ID" value="NC_000907.1"/>
</dbReference>
<dbReference type="SMR" id="P44315"/>
<dbReference type="STRING" id="71421.HI_1727"/>
<dbReference type="EnsemblBacteria" id="AAC23373">
    <property type="protein sequence ID" value="AAC23373"/>
    <property type="gene ID" value="HI_1727"/>
</dbReference>
<dbReference type="KEGG" id="hin:HI_1727"/>
<dbReference type="PATRIC" id="fig|71421.8.peg.1806"/>
<dbReference type="eggNOG" id="COG0137">
    <property type="taxonomic scope" value="Bacteria"/>
</dbReference>
<dbReference type="HOGENOM" id="CLU_032784_4_1_6"/>
<dbReference type="OrthoDB" id="9801641at2"/>
<dbReference type="PhylomeDB" id="P44315"/>
<dbReference type="BioCyc" id="HINF71421:G1GJ1-1742-MONOMER"/>
<dbReference type="UniPathway" id="UPA00068">
    <property type="reaction ID" value="UER00113"/>
</dbReference>
<dbReference type="Proteomes" id="UP000000579">
    <property type="component" value="Chromosome"/>
</dbReference>
<dbReference type="GO" id="GO:0005737">
    <property type="term" value="C:cytoplasm"/>
    <property type="evidence" value="ECO:0000318"/>
    <property type="project" value="GO_Central"/>
</dbReference>
<dbReference type="GO" id="GO:0004055">
    <property type="term" value="F:argininosuccinate synthase activity"/>
    <property type="evidence" value="ECO:0000318"/>
    <property type="project" value="GO_Central"/>
</dbReference>
<dbReference type="GO" id="GO:0005524">
    <property type="term" value="F:ATP binding"/>
    <property type="evidence" value="ECO:0007669"/>
    <property type="project" value="UniProtKB-UniRule"/>
</dbReference>
<dbReference type="GO" id="GO:0042803">
    <property type="term" value="F:protein homodimerization activity"/>
    <property type="evidence" value="ECO:0007669"/>
    <property type="project" value="InterPro"/>
</dbReference>
<dbReference type="GO" id="GO:0000053">
    <property type="term" value="P:argininosuccinate metabolic process"/>
    <property type="evidence" value="ECO:0000318"/>
    <property type="project" value="GO_Central"/>
</dbReference>
<dbReference type="GO" id="GO:0006526">
    <property type="term" value="P:L-arginine biosynthetic process"/>
    <property type="evidence" value="ECO:0000318"/>
    <property type="project" value="GO_Central"/>
</dbReference>
<dbReference type="GO" id="GO:0000050">
    <property type="term" value="P:urea cycle"/>
    <property type="evidence" value="ECO:0000318"/>
    <property type="project" value="GO_Central"/>
</dbReference>
<dbReference type="CDD" id="cd01999">
    <property type="entry name" value="ASS"/>
    <property type="match status" value="1"/>
</dbReference>
<dbReference type="FunFam" id="1.10.287.400:FF:000001">
    <property type="entry name" value="Argininosuccinate synthase"/>
    <property type="match status" value="1"/>
</dbReference>
<dbReference type="Gene3D" id="1.10.287.400">
    <property type="match status" value="1"/>
</dbReference>
<dbReference type="Gene3D" id="3.90.1260.10">
    <property type="entry name" value="Argininosuccinate synthetase, chain A, domain 2"/>
    <property type="match status" value="1"/>
</dbReference>
<dbReference type="Gene3D" id="3.40.50.620">
    <property type="entry name" value="HUPs"/>
    <property type="match status" value="1"/>
</dbReference>
<dbReference type="HAMAP" id="MF_00581">
    <property type="entry name" value="Arg_succ_synth_type2"/>
    <property type="match status" value="1"/>
</dbReference>
<dbReference type="InterPro" id="IPR023437">
    <property type="entry name" value="Arg_succ_synth_type2_subfam"/>
</dbReference>
<dbReference type="InterPro" id="IPR048268">
    <property type="entry name" value="Arginosuc_syn_C"/>
</dbReference>
<dbReference type="InterPro" id="IPR048267">
    <property type="entry name" value="Arginosuc_syn_N"/>
</dbReference>
<dbReference type="InterPro" id="IPR001518">
    <property type="entry name" value="Arginosuc_synth"/>
</dbReference>
<dbReference type="InterPro" id="IPR018223">
    <property type="entry name" value="Arginosuc_synth_CS"/>
</dbReference>
<dbReference type="InterPro" id="IPR023434">
    <property type="entry name" value="Arginosuc_synth_type_1_subfam"/>
</dbReference>
<dbReference type="InterPro" id="IPR024074">
    <property type="entry name" value="AS_cat/multimer_dom_body"/>
</dbReference>
<dbReference type="InterPro" id="IPR024073">
    <property type="entry name" value="AS_multimer_C_tail"/>
</dbReference>
<dbReference type="InterPro" id="IPR014729">
    <property type="entry name" value="Rossmann-like_a/b/a_fold"/>
</dbReference>
<dbReference type="NCBIfam" id="TIGR00032">
    <property type="entry name" value="argG"/>
    <property type="match status" value="1"/>
</dbReference>
<dbReference type="NCBIfam" id="NF003779">
    <property type="entry name" value="PRK05370.1"/>
    <property type="match status" value="1"/>
</dbReference>
<dbReference type="PANTHER" id="PTHR11587">
    <property type="entry name" value="ARGININOSUCCINATE SYNTHASE"/>
    <property type="match status" value="1"/>
</dbReference>
<dbReference type="PANTHER" id="PTHR11587:SF2">
    <property type="entry name" value="ARGININOSUCCINATE SYNTHASE"/>
    <property type="match status" value="1"/>
</dbReference>
<dbReference type="Pfam" id="PF20979">
    <property type="entry name" value="Arginosuc_syn_C"/>
    <property type="match status" value="1"/>
</dbReference>
<dbReference type="Pfam" id="PF00764">
    <property type="entry name" value="Arginosuc_synth"/>
    <property type="match status" value="1"/>
</dbReference>
<dbReference type="SUPFAM" id="SSF52402">
    <property type="entry name" value="Adenine nucleotide alpha hydrolases-like"/>
    <property type="match status" value="1"/>
</dbReference>
<dbReference type="SUPFAM" id="SSF69864">
    <property type="entry name" value="Argininosuccinate synthetase, C-terminal domain"/>
    <property type="match status" value="1"/>
</dbReference>
<dbReference type="PROSITE" id="PS00564">
    <property type="entry name" value="ARGININOSUCCIN_SYN_1"/>
    <property type="match status" value="1"/>
</dbReference>
<dbReference type="PROSITE" id="PS00565">
    <property type="entry name" value="ARGININOSUCCIN_SYN_2"/>
    <property type="match status" value="1"/>
</dbReference>
<organism>
    <name type="scientific">Haemophilus influenzae (strain ATCC 51907 / DSM 11121 / KW20 / Rd)</name>
    <dbReference type="NCBI Taxonomy" id="71421"/>
    <lineage>
        <taxon>Bacteria</taxon>
        <taxon>Pseudomonadati</taxon>
        <taxon>Pseudomonadota</taxon>
        <taxon>Gammaproteobacteria</taxon>
        <taxon>Pasteurellales</taxon>
        <taxon>Pasteurellaceae</taxon>
        <taxon>Haemophilus</taxon>
    </lineage>
</organism>
<feature type="chain" id="PRO_0000148700" description="Argininosuccinate synthase">
    <location>
        <begin position="1"/>
        <end position="444"/>
    </location>
</feature>
<feature type="binding site" evidence="1">
    <location>
        <begin position="18"/>
        <end position="26"/>
    </location>
    <ligand>
        <name>ATP</name>
        <dbReference type="ChEBI" id="CHEBI:30616"/>
    </ligand>
</feature>
<feature type="binding site" evidence="1">
    <location>
        <position position="44"/>
    </location>
    <ligand>
        <name>ATP</name>
        <dbReference type="ChEBI" id="CHEBI:30616"/>
    </ligand>
</feature>
<feature type="binding site" evidence="1">
    <location>
        <position position="100"/>
    </location>
    <ligand>
        <name>L-citrulline</name>
        <dbReference type="ChEBI" id="CHEBI:57743"/>
    </ligand>
</feature>
<feature type="binding site" evidence="1">
    <location>
        <position position="130"/>
    </location>
    <ligand>
        <name>ATP</name>
        <dbReference type="ChEBI" id="CHEBI:30616"/>
    </ligand>
</feature>
<feature type="binding site" evidence="1">
    <location>
        <position position="132"/>
    </location>
    <ligand>
        <name>ATP</name>
        <dbReference type="ChEBI" id="CHEBI:30616"/>
    </ligand>
</feature>
<feature type="binding site" evidence="1">
    <location>
        <position position="132"/>
    </location>
    <ligand>
        <name>L-aspartate</name>
        <dbReference type="ChEBI" id="CHEBI:29991"/>
    </ligand>
</feature>
<feature type="binding site" evidence="1">
    <location>
        <position position="136"/>
    </location>
    <ligand>
        <name>L-aspartate</name>
        <dbReference type="ChEBI" id="CHEBI:29991"/>
    </ligand>
</feature>
<feature type="binding site" evidence="1">
    <location>
        <position position="136"/>
    </location>
    <ligand>
        <name>L-citrulline</name>
        <dbReference type="ChEBI" id="CHEBI:57743"/>
    </ligand>
</feature>
<feature type="binding site" evidence="1">
    <location>
        <position position="137"/>
    </location>
    <ligand>
        <name>ATP</name>
        <dbReference type="ChEBI" id="CHEBI:30616"/>
    </ligand>
</feature>
<feature type="binding site" evidence="1">
    <location>
        <position position="137"/>
    </location>
    <ligand>
        <name>L-aspartate</name>
        <dbReference type="ChEBI" id="CHEBI:29991"/>
    </ligand>
</feature>
<feature type="binding site" evidence="1">
    <location>
        <position position="140"/>
    </location>
    <ligand>
        <name>L-citrulline</name>
        <dbReference type="ChEBI" id="CHEBI:57743"/>
    </ligand>
</feature>
<feature type="binding site" evidence="1">
    <location>
        <position position="193"/>
    </location>
    <ligand>
        <name>L-citrulline</name>
        <dbReference type="ChEBI" id="CHEBI:57743"/>
    </ligand>
</feature>
<feature type="binding site" evidence="1">
    <location>
        <position position="195"/>
    </location>
    <ligand>
        <name>ATP</name>
        <dbReference type="ChEBI" id="CHEBI:30616"/>
    </ligand>
</feature>
<feature type="binding site" evidence="1">
    <location>
        <position position="202"/>
    </location>
    <ligand>
        <name>L-citrulline</name>
        <dbReference type="ChEBI" id="CHEBI:57743"/>
    </ligand>
</feature>
<feature type="binding site" evidence="1">
    <location>
        <position position="204"/>
    </location>
    <ligand>
        <name>L-citrulline</name>
        <dbReference type="ChEBI" id="CHEBI:57743"/>
    </ligand>
</feature>
<feature type="binding site" evidence="1">
    <location>
        <position position="281"/>
    </location>
    <ligand>
        <name>L-citrulline</name>
        <dbReference type="ChEBI" id="CHEBI:57743"/>
    </ligand>
</feature>
<accession>P44315</accession>
<protein>
    <recommendedName>
        <fullName>Argininosuccinate synthase</fullName>
        <ecNumber>6.3.4.5</ecNumber>
    </recommendedName>
    <alternativeName>
        <fullName>Citrulline--aspartate ligase</fullName>
    </alternativeName>
</protein>